<protein>
    <recommendedName>
        <fullName>Nucleoside diphosphate kinase 3</fullName>
        <ecNumber evidence="2">2.7.4.6</ecNumber>
    </recommendedName>
    <alternativeName>
        <fullName>NM23 nucleoside diphosphate kinase 3</fullName>
    </alternativeName>
</protein>
<comment type="function">
    <text evidence="2 4">Catalyzes the phosphorylation of ribonucleosides and deoxyribonucleoside diphosphates, other than ATP, into the corresponding triphosphates with ATP as the major phosphate donor. The ATP gamma phosphate is transferred to the nucleoside diphosphate beta phosphate via a ping-pong mechanism, using a phosphorylated active-site intermediate. Through the catalyzed exchange of gamma-phosphate between di- and triphosphonucleosides participates in regulation of intracellular nucleotide homeostasis (By similarity). Required for ciliary function during renal development (PubMed:30111592).</text>
</comment>
<comment type="function">
    <text evidence="2">Independently of its kinase activity, facilitates mitochondrial tethering prior to membrane fusion through its direct membrane-binding and hexamerization. Implicated in repair of both single- and double-stranded breaks in DNA, independently of its kinase activity.</text>
</comment>
<comment type="catalytic activity">
    <reaction evidence="2">
        <text>a 2'-deoxyribonucleoside 5'-diphosphate + ATP = a 2'-deoxyribonucleoside 5'-triphosphate + ADP</text>
        <dbReference type="Rhea" id="RHEA:44640"/>
        <dbReference type="ChEBI" id="CHEBI:30616"/>
        <dbReference type="ChEBI" id="CHEBI:61560"/>
        <dbReference type="ChEBI" id="CHEBI:73316"/>
        <dbReference type="ChEBI" id="CHEBI:456216"/>
        <dbReference type="EC" id="2.7.4.6"/>
    </reaction>
    <physiologicalReaction direction="left-to-right" evidence="2">
        <dbReference type="Rhea" id="RHEA:44641"/>
    </physiologicalReaction>
</comment>
<comment type="catalytic activity">
    <reaction evidence="2">
        <text>a ribonucleoside 5'-diphosphate + ATP = a ribonucleoside 5'-triphosphate + ADP</text>
        <dbReference type="Rhea" id="RHEA:18113"/>
        <dbReference type="ChEBI" id="CHEBI:30616"/>
        <dbReference type="ChEBI" id="CHEBI:57930"/>
        <dbReference type="ChEBI" id="CHEBI:61557"/>
        <dbReference type="ChEBI" id="CHEBI:456216"/>
        <dbReference type="EC" id="2.7.4.6"/>
    </reaction>
    <physiologicalReaction direction="left-to-right" evidence="2">
        <dbReference type="Rhea" id="RHEA:18114"/>
    </physiologicalReaction>
</comment>
<comment type="cofactor">
    <cofactor evidence="1">
        <name>Mg(2+)</name>
        <dbReference type="ChEBI" id="CHEBI:18420"/>
    </cofactor>
</comment>
<comment type="subunit">
    <text evidence="2">Homohexamer.</text>
</comment>
<comment type="subcellular location">
    <subcellularLocation>
        <location evidence="2">Mitochondrion outer membrane</location>
        <topology evidence="2">Peripheral membrane protein</topology>
    </subcellularLocation>
    <subcellularLocation>
        <location evidence="2">Cytoplasm</location>
    </subcellularLocation>
    <subcellularLocation>
        <location evidence="3">Cytoplasm</location>
        <location evidence="3">Cytoskeleton</location>
        <location evidence="3">Cilium basal body</location>
    </subcellularLocation>
</comment>
<comment type="developmental stage">
    <text evidence="4">Widely expressed at 24 hpf.</text>
</comment>
<comment type="domain">
    <text evidence="2">The N-terminal hydrophobic region (1-17) is critical for mitochondrial outer membrane targeting and phosphatidic acid binding.</text>
</comment>
<comment type="disruption phenotype">
    <text evidence="4">Morpholino knockdown of the protein results in cyst formation and left-right asymmetry defects.</text>
</comment>
<comment type="similarity">
    <text evidence="5">Belongs to the NDK family.</text>
</comment>
<organism>
    <name type="scientific">Danio rerio</name>
    <name type="common">Zebrafish</name>
    <name type="synonym">Brachydanio rerio</name>
    <dbReference type="NCBI Taxonomy" id="7955"/>
    <lineage>
        <taxon>Eukaryota</taxon>
        <taxon>Metazoa</taxon>
        <taxon>Chordata</taxon>
        <taxon>Craniata</taxon>
        <taxon>Vertebrata</taxon>
        <taxon>Euteleostomi</taxon>
        <taxon>Actinopterygii</taxon>
        <taxon>Neopterygii</taxon>
        <taxon>Teleostei</taxon>
        <taxon>Ostariophysi</taxon>
        <taxon>Cypriniformes</taxon>
        <taxon>Danionidae</taxon>
        <taxon>Danioninae</taxon>
        <taxon>Danio</taxon>
    </lineage>
</organism>
<reference key="1">
    <citation type="submission" date="1999-11" db="EMBL/GenBank/DDBJ databases">
        <title>Zebrafish NDPK-Z3 mRNA.</title>
        <authorList>
            <person name="Mehus J.G."/>
            <person name="Lambeth D.O."/>
        </authorList>
    </citation>
    <scope>NUCLEOTIDE SEQUENCE [MRNA]</scope>
</reference>
<reference key="2">
    <citation type="journal article" date="2013" name="Nature">
        <title>The zebrafish reference genome sequence and its relationship to the human genome.</title>
        <authorList>
            <person name="Howe K."/>
            <person name="Clark M.D."/>
            <person name="Torroja C.F."/>
            <person name="Torrance J."/>
            <person name="Berthelot C."/>
            <person name="Muffato M."/>
            <person name="Collins J.E."/>
            <person name="Humphray S."/>
            <person name="McLaren K."/>
            <person name="Matthews L."/>
            <person name="McLaren S."/>
            <person name="Sealy I."/>
            <person name="Caccamo M."/>
            <person name="Churcher C."/>
            <person name="Scott C."/>
            <person name="Barrett J.C."/>
            <person name="Koch R."/>
            <person name="Rauch G.J."/>
            <person name="White S."/>
            <person name="Chow W."/>
            <person name="Kilian B."/>
            <person name="Quintais L.T."/>
            <person name="Guerra-Assuncao J.A."/>
            <person name="Zhou Y."/>
            <person name="Gu Y."/>
            <person name="Yen J."/>
            <person name="Vogel J.H."/>
            <person name="Eyre T."/>
            <person name="Redmond S."/>
            <person name="Banerjee R."/>
            <person name="Chi J."/>
            <person name="Fu B."/>
            <person name="Langley E."/>
            <person name="Maguire S.F."/>
            <person name="Laird G.K."/>
            <person name="Lloyd D."/>
            <person name="Kenyon E."/>
            <person name="Donaldson S."/>
            <person name="Sehra H."/>
            <person name="Almeida-King J."/>
            <person name="Loveland J."/>
            <person name="Trevanion S."/>
            <person name="Jones M."/>
            <person name="Quail M."/>
            <person name="Willey D."/>
            <person name="Hunt A."/>
            <person name="Burton J."/>
            <person name="Sims S."/>
            <person name="McLay K."/>
            <person name="Plumb B."/>
            <person name="Davis J."/>
            <person name="Clee C."/>
            <person name="Oliver K."/>
            <person name="Clark R."/>
            <person name="Riddle C."/>
            <person name="Elliot D."/>
            <person name="Threadgold G."/>
            <person name="Harden G."/>
            <person name="Ware D."/>
            <person name="Begum S."/>
            <person name="Mortimore B."/>
            <person name="Kerry G."/>
            <person name="Heath P."/>
            <person name="Phillimore B."/>
            <person name="Tracey A."/>
            <person name="Corby N."/>
            <person name="Dunn M."/>
            <person name="Johnson C."/>
            <person name="Wood J."/>
            <person name="Clark S."/>
            <person name="Pelan S."/>
            <person name="Griffiths G."/>
            <person name="Smith M."/>
            <person name="Glithero R."/>
            <person name="Howden P."/>
            <person name="Barker N."/>
            <person name="Lloyd C."/>
            <person name="Stevens C."/>
            <person name="Harley J."/>
            <person name="Holt K."/>
            <person name="Panagiotidis G."/>
            <person name="Lovell J."/>
            <person name="Beasley H."/>
            <person name="Henderson C."/>
            <person name="Gordon D."/>
            <person name="Auger K."/>
            <person name="Wright D."/>
            <person name="Collins J."/>
            <person name="Raisen C."/>
            <person name="Dyer L."/>
            <person name="Leung K."/>
            <person name="Robertson L."/>
            <person name="Ambridge K."/>
            <person name="Leongamornlert D."/>
            <person name="McGuire S."/>
            <person name="Gilderthorp R."/>
            <person name="Griffiths C."/>
            <person name="Manthravadi D."/>
            <person name="Nichol S."/>
            <person name="Barker G."/>
            <person name="Whitehead S."/>
            <person name="Kay M."/>
            <person name="Brown J."/>
            <person name="Murnane C."/>
            <person name="Gray E."/>
            <person name="Humphries M."/>
            <person name="Sycamore N."/>
            <person name="Barker D."/>
            <person name="Saunders D."/>
            <person name="Wallis J."/>
            <person name="Babbage A."/>
            <person name="Hammond S."/>
            <person name="Mashreghi-Mohammadi M."/>
            <person name="Barr L."/>
            <person name="Martin S."/>
            <person name="Wray P."/>
            <person name="Ellington A."/>
            <person name="Matthews N."/>
            <person name="Ellwood M."/>
            <person name="Woodmansey R."/>
            <person name="Clark G."/>
            <person name="Cooper J."/>
            <person name="Tromans A."/>
            <person name="Grafham D."/>
            <person name="Skuce C."/>
            <person name="Pandian R."/>
            <person name="Andrews R."/>
            <person name="Harrison E."/>
            <person name="Kimberley A."/>
            <person name="Garnett J."/>
            <person name="Fosker N."/>
            <person name="Hall R."/>
            <person name="Garner P."/>
            <person name="Kelly D."/>
            <person name="Bird C."/>
            <person name="Palmer S."/>
            <person name="Gehring I."/>
            <person name="Berger A."/>
            <person name="Dooley C.M."/>
            <person name="Ersan-Urun Z."/>
            <person name="Eser C."/>
            <person name="Geiger H."/>
            <person name="Geisler M."/>
            <person name="Karotki L."/>
            <person name="Kirn A."/>
            <person name="Konantz J."/>
            <person name="Konantz M."/>
            <person name="Oberlander M."/>
            <person name="Rudolph-Geiger S."/>
            <person name="Teucke M."/>
            <person name="Lanz C."/>
            <person name="Raddatz G."/>
            <person name="Osoegawa K."/>
            <person name="Zhu B."/>
            <person name="Rapp A."/>
            <person name="Widaa S."/>
            <person name="Langford C."/>
            <person name="Yang F."/>
            <person name="Schuster S.C."/>
            <person name="Carter N.P."/>
            <person name="Harrow J."/>
            <person name="Ning Z."/>
            <person name="Herrero J."/>
            <person name="Searle S.M."/>
            <person name="Enright A."/>
            <person name="Geisler R."/>
            <person name="Plasterk R.H."/>
            <person name="Lee C."/>
            <person name="Westerfield M."/>
            <person name="de Jong P.J."/>
            <person name="Zon L.I."/>
            <person name="Postlethwait J.H."/>
            <person name="Nusslein-Volhard C."/>
            <person name="Hubbard T.J."/>
            <person name="Roest Crollius H."/>
            <person name="Rogers J."/>
            <person name="Stemple D.L."/>
        </authorList>
    </citation>
    <scope>NUCLEOTIDE SEQUENCE [LARGE SCALE GENOMIC DNA]</scope>
    <source>
        <strain>Tuebingen</strain>
    </source>
</reference>
<reference key="3">
    <citation type="submission" date="2007-09" db="EMBL/GenBank/DDBJ databases">
        <authorList>
            <consortium name="NIH - Zebrafish Gene Collection (ZGC) project"/>
        </authorList>
    </citation>
    <scope>NUCLEOTIDE SEQUENCE [LARGE SCALE MRNA]</scope>
</reference>
<reference key="4">
    <citation type="journal article" date="2018" name="J. Biol. Chem.">
        <title>The nucleoside-diphosphate kinase NME3 associates with nephronophthisis proteins and is required for ciliary function during renal development.</title>
        <authorList>
            <person name="Hoff S."/>
            <person name="Epting D."/>
            <person name="Falk N."/>
            <person name="Schroda S."/>
            <person name="Braun D.A."/>
            <person name="Halbritter J."/>
            <person name="Hildebrandt F."/>
            <person name="Kramer-Zucker A."/>
            <person name="Bergmann C."/>
            <person name="Walz G."/>
            <person name="Lienkamp S.S."/>
        </authorList>
    </citation>
    <scope>DISRUPTION PHENOTYPE</scope>
    <scope>FUNCTION</scope>
    <scope>DEVELOPMENTAL STAGE</scope>
</reference>
<keyword id="KW-0067">ATP-binding</keyword>
<keyword id="KW-0966">Cell projection</keyword>
<keyword id="KW-0963">Cytoplasm</keyword>
<keyword id="KW-0206">Cytoskeleton</keyword>
<keyword id="KW-0418">Kinase</keyword>
<keyword id="KW-0472">Membrane</keyword>
<keyword id="KW-0496">Mitochondrion</keyword>
<keyword id="KW-1000">Mitochondrion outer membrane</keyword>
<keyword id="KW-0547">Nucleotide-binding</keyword>
<keyword id="KW-1185">Reference proteome</keyword>
<keyword id="KW-0808">Transferase</keyword>
<proteinExistence type="evidence at transcript level"/>
<gene>
    <name evidence="6" type="primary">nme3</name>
    <name type="synonym">ndpkz3</name>
</gene>
<sequence length="169" mass="19342">MIILCLTIFANIFKPGWTGANERTFLAVKPDGVQRRLVGEIIRRFERKGFKLVGMKLLQASEAQLRQHYWELREKPFYNGLVKYMSSGPIVAMVWQGLDVVKTARKMLGETNPADSLPGTIRGDYCVEVGRNVIHGSDSVESAAREISLWFEDHELFCYEECGQHWIYA</sequence>
<feature type="chain" id="PRO_5015099928" description="Nucleoside diphosphate kinase 3">
    <location>
        <begin position="1"/>
        <end position="169"/>
    </location>
</feature>
<feature type="active site" description="Pros-phosphohistidine intermediate" evidence="1">
    <location>
        <position position="135"/>
    </location>
</feature>
<feature type="binding site" evidence="2">
    <location>
        <position position="29"/>
    </location>
    <ligand>
        <name>ADP</name>
        <dbReference type="ChEBI" id="CHEBI:456216"/>
    </ligand>
</feature>
<feature type="binding site" evidence="2">
    <location>
        <position position="105"/>
    </location>
    <ligand>
        <name>ADP</name>
        <dbReference type="ChEBI" id="CHEBI:456216"/>
    </ligand>
</feature>
<feature type="binding site" evidence="2">
    <location>
        <position position="111"/>
    </location>
    <ligand>
        <name>ADP</name>
        <dbReference type="ChEBI" id="CHEBI:456216"/>
    </ligand>
</feature>
<feature type="binding site" evidence="2">
    <location>
        <position position="122"/>
    </location>
    <ligand>
        <name>ADP</name>
        <dbReference type="ChEBI" id="CHEBI:456216"/>
    </ligand>
</feature>
<feature type="binding site" evidence="2">
    <location>
        <position position="129"/>
    </location>
    <ligand>
        <name>ADP</name>
        <dbReference type="ChEBI" id="CHEBI:456216"/>
    </ligand>
</feature>
<feature type="binding site" evidence="2">
    <location>
        <position position="132"/>
    </location>
    <ligand>
        <name>ADP</name>
        <dbReference type="ChEBI" id="CHEBI:456216"/>
    </ligand>
</feature>
<dbReference type="EC" id="2.7.4.6" evidence="2"/>
<dbReference type="EMBL" id="AF202054">
    <property type="protein sequence ID" value="AAF20912.1"/>
    <property type="molecule type" value="mRNA"/>
</dbReference>
<dbReference type="EMBL" id="BX936333">
    <property type="status" value="NOT_ANNOTATED_CDS"/>
    <property type="molecule type" value="Genomic_DNA"/>
</dbReference>
<dbReference type="EMBL" id="CR387933">
    <property type="status" value="NOT_ANNOTATED_CDS"/>
    <property type="molecule type" value="Genomic_DNA"/>
</dbReference>
<dbReference type="EMBL" id="BC076156">
    <property type="protein sequence ID" value="AAH76156.1"/>
    <property type="molecule type" value="mRNA"/>
</dbReference>
<dbReference type="EMBL" id="BC152688">
    <property type="protein sequence ID" value="AAI52689.1"/>
    <property type="molecule type" value="mRNA"/>
</dbReference>
<dbReference type="RefSeq" id="NP_571003.1">
    <property type="nucleotide sequence ID" value="NM_130928.2"/>
</dbReference>
<dbReference type="SMR" id="Q9PTF3"/>
<dbReference type="Ensembl" id="ENSDART00000160628">
    <property type="protein sequence ID" value="ENSDARP00000132457"/>
    <property type="gene ID" value="ENSDARG00000100990"/>
</dbReference>
<dbReference type="GeneID" id="30085"/>
<dbReference type="KEGG" id="dre:30085"/>
<dbReference type="AGR" id="ZFIN:ZDB-GENE-000210-34"/>
<dbReference type="CTD" id="4832"/>
<dbReference type="ZFIN" id="ZDB-GENE-000210-34">
    <property type="gene designation" value="nme3"/>
</dbReference>
<dbReference type="HOGENOM" id="CLU_060216_6_3_1"/>
<dbReference type="OrthoDB" id="2162449at2759"/>
<dbReference type="BRENDA" id="2.7.4.6">
    <property type="organism ID" value="928"/>
</dbReference>
<dbReference type="Proteomes" id="UP000000437">
    <property type="component" value="Chromosome 3"/>
</dbReference>
<dbReference type="Bgee" id="ENSDARG00000100990">
    <property type="expression patterns" value="Expressed in paraxial mesoderm and 33 other cell types or tissues"/>
</dbReference>
<dbReference type="ExpressionAtlas" id="Q9PTF3">
    <property type="expression patterns" value="baseline and differential"/>
</dbReference>
<dbReference type="GO" id="GO:0036064">
    <property type="term" value="C:ciliary basal body"/>
    <property type="evidence" value="ECO:0000250"/>
    <property type="project" value="UniProtKB"/>
</dbReference>
<dbReference type="GO" id="GO:0005737">
    <property type="term" value="C:cytoplasm"/>
    <property type="evidence" value="ECO:0000250"/>
    <property type="project" value="UniProtKB"/>
</dbReference>
<dbReference type="GO" id="GO:0005741">
    <property type="term" value="C:mitochondrial outer membrane"/>
    <property type="evidence" value="ECO:0000250"/>
    <property type="project" value="UniProtKB"/>
</dbReference>
<dbReference type="GO" id="GO:0005524">
    <property type="term" value="F:ATP binding"/>
    <property type="evidence" value="ECO:0007669"/>
    <property type="project" value="UniProtKB-KW"/>
</dbReference>
<dbReference type="GO" id="GO:0004550">
    <property type="term" value="F:nucleoside diphosphate kinase activity"/>
    <property type="evidence" value="ECO:0000250"/>
    <property type="project" value="UniProtKB"/>
</dbReference>
<dbReference type="GO" id="GO:0006241">
    <property type="term" value="P:CTP biosynthetic process"/>
    <property type="evidence" value="ECO:0007669"/>
    <property type="project" value="InterPro"/>
</dbReference>
<dbReference type="GO" id="GO:0007368">
    <property type="term" value="P:determination of left/right symmetry"/>
    <property type="evidence" value="ECO:0000315"/>
    <property type="project" value="UniProtKB"/>
</dbReference>
<dbReference type="GO" id="GO:0006281">
    <property type="term" value="P:DNA repair"/>
    <property type="evidence" value="ECO:0000250"/>
    <property type="project" value="UniProtKB"/>
</dbReference>
<dbReference type="GO" id="GO:0006183">
    <property type="term" value="P:GTP biosynthetic process"/>
    <property type="evidence" value="ECO:0007669"/>
    <property type="project" value="InterPro"/>
</dbReference>
<dbReference type="GO" id="GO:0001822">
    <property type="term" value="P:kidney development"/>
    <property type="evidence" value="ECO:0000315"/>
    <property type="project" value="UniProtKB"/>
</dbReference>
<dbReference type="GO" id="GO:0008053">
    <property type="term" value="P:mitochondrial fusion"/>
    <property type="evidence" value="ECO:0000250"/>
    <property type="project" value="UniProtKB"/>
</dbReference>
<dbReference type="GO" id="GO:0009142">
    <property type="term" value="P:nucleoside triphosphate biosynthetic process"/>
    <property type="evidence" value="ECO:0000250"/>
    <property type="project" value="UniProtKB"/>
</dbReference>
<dbReference type="GO" id="GO:0106071">
    <property type="term" value="P:positive regulation of adenylate cyclase-activating G protein-coupled receptor signaling pathway"/>
    <property type="evidence" value="ECO:0000315"/>
    <property type="project" value="ZFIN"/>
</dbReference>
<dbReference type="GO" id="GO:0006228">
    <property type="term" value="P:UTP biosynthetic process"/>
    <property type="evidence" value="ECO:0007669"/>
    <property type="project" value="InterPro"/>
</dbReference>
<dbReference type="CDD" id="cd04413">
    <property type="entry name" value="NDPk_I"/>
    <property type="match status" value="1"/>
</dbReference>
<dbReference type="FunFam" id="3.30.70.141:FF:000002">
    <property type="entry name" value="Nucleoside diphosphate kinase"/>
    <property type="match status" value="1"/>
</dbReference>
<dbReference type="Gene3D" id="3.30.70.141">
    <property type="entry name" value="Nucleoside diphosphate kinase-like domain"/>
    <property type="match status" value="1"/>
</dbReference>
<dbReference type="HAMAP" id="MF_00451">
    <property type="entry name" value="NDP_kinase"/>
    <property type="match status" value="1"/>
</dbReference>
<dbReference type="InterPro" id="IPR034907">
    <property type="entry name" value="NDK-like_dom"/>
</dbReference>
<dbReference type="InterPro" id="IPR036850">
    <property type="entry name" value="NDK-like_dom_sf"/>
</dbReference>
<dbReference type="InterPro" id="IPR001564">
    <property type="entry name" value="Nucleoside_diP_kinase"/>
</dbReference>
<dbReference type="InterPro" id="IPR023005">
    <property type="entry name" value="Nucleoside_diP_kinase_AS"/>
</dbReference>
<dbReference type="NCBIfam" id="NF001908">
    <property type="entry name" value="PRK00668.1"/>
    <property type="match status" value="1"/>
</dbReference>
<dbReference type="PANTHER" id="PTHR11349">
    <property type="entry name" value="NUCLEOSIDE DIPHOSPHATE KINASE"/>
    <property type="match status" value="1"/>
</dbReference>
<dbReference type="Pfam" id="PF00334">
    <property type="entry name" value="NDK"/>
    <property type="match status" value="1"/>
</dbReference>
<dbReference type="PRINTS" id="PR01243">
    <property type="entry name" value="NUCDPKINASE"/>
</dbReference>
<dbReference type="SMART" id="SM00562">
    <property type="entry name" value="NDK"/>
    <property type="match status" value="1"/>
</dbReference>
<dbReference type="SUPFAM" id="SSF54919">
    <property type="entry name" value="Nucleoside diphosphate kinase, NDK"/>
    <property type="match status" value="1"/>
</dbReference>
<dbReference type="PROSITE" id="PS00469">
    <property type="entry name" value="NDPK"/>
    <property type="match status" value="1"/>
</dbReference>
<dbReference type="PROSITE" id="PS51374">
    <property type="entry name" value="NDPK_LIKE"/>
    <property type="match status" value="1"/>
</dbReference>
<accession>Q9PTF3</accession>
<accession>A0A0R4IE65</accession>
<accession>A7YYJ8</accession>
<evidence type="ECO:0000250" key="1">
    <source>
        <dbReference type="UniProtKB" id="P22392"/>
    </source>
</evidence>
<evidence type="ECO:0000250" key="2">
    <source>
        <dbReference type="UniProtKB" id="Q13232"/>
    </source>
</evidence>
<evidence type="ECO:0000250" key="3">
    <source>
        <dbReference type="UniProtKB" id="Q9WV85"/>
    </source>
</evidence>
<evidence type="ECO:0000269" key="4">
    <source>
    </source>
</evidence>
<evidence type="ECO:0000305" key="5"/>
<evidence type="ECO:0000312" key="6">
    <source>
        <dbReference type="ZFIN" id="ZDB-GENE-000210-34"/>
    </source>
</evidence>
<name>NDK3_DANRE</name>